<proteinExistence type="inferred from homology"/>
<comment type="function">
    <text evidence="1">Catalyzes the transformation of pimelate into pimeloyl-CoA with concomitant hydrolysis of ATP to AMP.</text>
</comment>
<comment type="catalytic activity">
    <reaction evidence="1">
        <text>heptanedioate + ATP + CoA = 6-carboxyhexanoyl-CoA + AMP + diphosphate</text>
        <dbReference type="Rhea" id="RHEA:14781"/>
        <dbReference type="ChEBI" id="CHEBI:30616"/>
        <dbReference type="ChEBI" id="CHEBI:33019"/>
        <dbReference type="ChEBI" id="CHEBI:36165"/>
        <dbReference type="ChEBI" id="CHEBI:57287"/>
        <dbReference type="ChEBI" id="CHEBI:57360"/>
        <dbReference type="ChEBI" id="CHEBI:456215"/>
        <dbReference type="EC" id="6.2.1.14"/>
    </reaction>
</comment>
<comment type="cofactor">
    <cofactor evidence="1">
        <name>Mg(2+)</name>
        <dbReference type="ChEBI" id="CHEBI:18420"/>
    </cofactor>
</comment>
<comment type="pathway">
    <text evidence="1">Metabolic intermediate metabolism; pimeloyl-CoA biosynthesis; pimeloyl-CoA from pimelate: step 1/1.</text>
</comment>
<comment type="subunit">
    <text evidence="1">Homodimer.</text>
</comment>
<comment type="similarity">
    <text evidence="1">Belongs to the BioW family.</text>
</comment>
<dbReference type="EC" id="6.2.1.14" evidence="1"/>
<dbReference type="EMBL" id="BA000033">
    <property type="protein sequence ID" value="BAB96211.1"/>
    <property type="molecule type" value="Genomic_DNA"/>
</dbReference>
<dbReference type="RefSeq" id="WP_000286878.1">
    <property type="nucleotide sequence ID" value="NC_003923.1"/>
</dbReference>
<dbReference type="SMR" id="Q8NV07"/>
<dbReference type="KEGG" id="sam:MW2346"/>
<dbReference type="HOGENOM" id="CLU_076858_0_0_9"/>
<dbReference type="UniPathway" id="UPA00999">
    <property type="reaction ID" value="UER00351"/>
</dbReference>
<dbReference type="GO" id="GO:0042410">
    <property type="term" value="F:6-carboxyhexanoate-CoA ligase activity"/>
    <property type="evidence" value="ECO:0007669"/>
    <property type="project" value="UniProtKB-UniRule"/>
</dbReference>
<dbReference type="GO" id="GO:0005524">
    <property type="term" value="F:ATP binding"/>
    <property type="evidence" value="ECO:0007669"/>
    <property type="project" value="UniProtKB-KW"/>
</dbReference>
<dbReference type="GO" id="GO:0000287">
    <property type="term" value="F:magnesium ion binding"/>
    <property type="evidence" value="ECO:0007669"/>
    <property type="project" value="UniProtKB-UniRule"/>
</dbReference>
<dbReference type="GO" id="GO:0009102">
    <property type="term" value="P:biotin biosynthetic process"/>
    <property type="evidence" value="ECO:0007669"/>
    <property type="project" value="UniProtKB-UniRule"/>
</dbReference>
<dbReference type="HAMAP" id="MF_00668">
    <property type="entry name" value="BioW"/>
    <property type="match status" value="1"/>
</dbReference>
<dbReference type="InterPro" id="IPR005499">
    <property type="entry name" value="BioW"/>
</dbReference>
<dbReference type="NCBIfam" id="NF002360">
    <property type="entry name" value="PRK01322.1"/>
    <property type="match status" value="1"/>
</dbReference>
<dbReference type="Pfam" id="PF03744">
    <property type="entry name" value="BioW"/>
    <property type="match status" value="1"/>
</dbReference>
<protein>
    <recommendedName>
        <fullName evidence="1">6-carboxyhexanoate--CoA ligase</fullName>
        <ecNumber evidence="1">6.2.1.14</ecNumber>
    </recommendedName>
    <alternativeName>
        <fullName evidence="1">Pimeloyl-CoA synthase</fullName>
    </alternativeName>
</protein>
<name>BIOW_STAAW</name>
<evidence type="ECO:0000255" key="1">
    <source>
        <dbReference type="HAMAP-Rule" id="MF_00668"/>
    </source>
</evidence>
<keyword id="KW-0067">ATP-binding</keyword>
<keyword id="KW-0093">Biotin biosynthesis</keyword>
<keyword id="KW-0436">Ligase</keyword>
<keyword id="KW-0460">Magnesium</keyword>
<keyword id="KW-0547">Nucleotide-binding</keyword>
<gene>
    <name evidence="1" type="primary">bioW</name>
    <name type="ordered locus">MW2346</name>
</gene>
<reference key="1">
    <citation type="journal article" date="2002" name="Lancet">
        <title>Genome and virulence determinants of high virulence community-acquired MRSA.</title>
        <authorList>
            <person name="Baba T."/>
            <person name="Takeuchi F."/>
            <person name="Kuroda M."/>
            <person name="Yuzawa H."/>
            <person name="Aoki K."/>
            <person name="Oguchi A."/>
            <person name="Nagai Y."/>
            <person name="Iwama N."/>
            <person name="Asano K."/>
            <person name="Naimi T."/>
            <person name="Kuroda H."/>
            <person name="Cui L."/>
            <person name="Yamamoto K."/>
            <person name="Hiramatsu K."/>
        </authorList>
    </citation>
    <scope>NUCLEOTIDE SEQUENCE [LARGE SCALE GENOMIC DNA]</scope>
    <source>
        <strain>MW2</strain>
    </source>
</reference>
<feature type="chain" id="PRO_0000191022" description="6-carboxyhexanoate--CoA ligase">
    <location>
        <begin position="1"/>
        <end position="230"/>
    </location>
</feature>
<sequence>MYSIKMRSSNQDVHISGAETICEFDKIEQTVQRFYNKGFFHENGQPDFLNIKIQKIMEPIQQIKALQIIEDDKANLQHLTQECGVTEQALNQGMTYIKNETVYTGAIILSAISGKRLDSFGQRGIRATHFSFEDINNKGDLNERVTDALAIASCINAHPYVKGELCVSDDLTYTTGYFASAKIGYHRLFDIKPVNTRYGGRIIFVDDRIDLNHYISFLESTPKQVVYERV</sequence>
<accession>Q8NV07</accession>
<organism>
    <name type="scientific">Staphylococcus aureus (strain MW2)</name>
    <dbReference type="NCBI Taxonomy" id="196620"/>
    <lineage>
        <taxon>Bacteria</taxon>
        <taxon>Bacillati</taxon>
        <taxon>Bacillota</taxon>
        <taxon>Bacilli</taxon>
        <taxon>Bacillales</taxon>
        <taxon>Staphylococcaceae</taxon>
        <taxon>Staphylococcus</taxon>
    </lineage>
</organism>